<gene>
    <name evidence="1" type="primary">mraY</name>
    <name type="ordered locus">NMC1747</name>
</gene>
<reference key="1">
    <citation type="journal article" date="2007" name="PLoS Genet.">
        <title>Meningococcal genetic variation mechanisms viewed through comparative analysis of serogroup C strain FAM18.</title>
        <authorList>
            <person name="Bentley S.D."/>
            <person name="Vernikos G.S."/>
            <person name="Snyder L.A.S."/>
            <person name="Churcher C."/>
            <person name="Arrowsmith C."/>
            <person name="Chillingworth T."/>
            <person name="Cronin A."/>
            <person name="Davis P.H."/>
            <person name="Holroyd N.E."/>
            <person name="Jagels K."/>
            <person name="Maddison M."/>
            <person name="Moule S."/>
            <person name="Rabbinowitsch E."/>
            <person name="Sharp S."/>
            <person name="Unwin L."/>
            <person name="Whitehead S."/>
            <person name="Quail M.A."/>
            <person name="Achtman M."/>
            <person name="Barrell B.G."/>
            <person name="Saunders N.J."/>
            <person name="Parkhill J."/>
        </authorList>
    </citation>
    <scope>NUCLEOTIDE SEQUENCE [LARGE SCALE GENOMIC DNA]</scope>
    <source>
        <strain>ATCC 700532 / DSM 15464 / FAM18</strain>
    </source>
</reference>
<dbReference type="EC" id="2.7.8.13" evidence="1"/>
<dbReference type="EMBL" id="AM421808">
    <property type="protein sequence ID" value="CAM10921.1"/>
    <property type="molecule type" value="Genomic_DNA"/>
</dbReference>
<dbReference type="RefSeq" id="WP_002224924.1">
    <property type="nucleotide sequence ID" value="NC_008767.1"/>
</dbReference>
<dbReference type="SMR" id="A1KVL7"/>
<dbReference type="KEGG" id="nmc:NMC1747"/>
<dbReference type="HOGENOM" id="CLU_023982_0_0_4"/>
<dbReference type="UniPathway" id="UPA00219"/>
<dbReference type="Proteomes" id="UP000002286">
    <property type="component" value="Chromosome"/>
</dbReference>
<dbReference type="GO" id="GO:0005886">
    <property type="term" value="C:plasma membrane"/>
    <property type="evidence" value="ECO:0007669"/>
    <property type="project" value="UniProtKB-SubCell"/>
</dbReference>
<dbReference type="GO" id="GO:0046872">
    <property type="term" value="F:metal ion binding"/>
    <property type="evidence" value="ECO:0007669"/>
    <property type="project" value="UniProtKB-KW"/>
</dbReference>
<dbReference type="GO" id="GO:0008963">
    <property type="term" value="F:phospho-N-acetylmuramoyl-pentapeptide-transferase activity"/>
    <property type="evidence" value="ECO:0007669"/>
    <property type="project" value="UniProtKB-UniRule"/>
</dbReference>
<dbReference type="GO" id="GO:0051992">
    <property type="term" value="F:UDP-N-acetylmuramoyl-L-alanyl-D-glutamyl-meso-2,6-diaminopimelyl-D-alanyl-D-alanine:undecaprenyl-phosphate transferase activity"/>
    <property type="evidence" value="ECO:0007669"/>
    <property type="project" value="RHEA"/>
</dbReference>
<dbReference type="GO" id="GO:0051301">
    <property type="term" value="P:cell division"/>
    <property type="evidence" value="ECO:0007669"/>
    <property type="project" value="UniProtKB-KW"/>
</dbReference>
<dbReference type="GO" id="GO:0071555">
    <property type="term" value="P:cell wall organization"/>
    <property type="evidence" value="ECO:0007669"/>
    <property type="project" value="UniProtKB-KW"/>
</dbReference>
<dbReference type="GO" id="GO:0009252">
    <property type="term" value="P:peptidoglycan biosynthetic process"/>
    <property type="evidence" value="ECO:0007669"/>
    <property type="project" value="UniProtKB-UniRule"/>
</dbReference>
<dbReference type="GO" id="GO:0008360">
    <property type="term" value="P:regulation of cell shape"/>
    <property type="evidence" value="ECO:0007669"/>
    <property type="project" value="UniProtKB-KW"/>
</dbReference>
<dbReference type="CDD" id="cd06852">
    <property type="entry name" value="GT_MraY"/>
    <property type="match status" value="1"/>
</dbReference>
<dbReference type="HAMAP" id="MF_00038">
    <property type="entry name" value="MraY"/>
    <property type="match status" value="1"/>
</dbReference>
<dbReference type="InterPro" id="IPR000715">
    <property type="entry name" value="Glycosyl_transferase_4"/>
</dbReference>
<dbReference type="InterPro" id="IPR003524">
    <property type="entry name" value="PNAcMuramoyl-5peptid_Trfase"/>
</dbReference>
<dbReference type="InterPro" id="IPR018480">
    <property type="entry name" value="PNAcMuramoyl-5peptid_Trfase_CS"/>
</dbReference>
<dbReference type="NCBIfam" id="TIGR00445">
    <property type="entry name" value="mraY"/>
    <property type="match status" value="1"/>
</dbReference>
<dbReference type="PANTHER" id="PTHR22926">
    <property type="entry name" value="PHOSPHO-N-ACETYLMURAMOYL-PENTAPEPTIDE-TRANSFERASE"/>
    <property type="match status" value="1"/>
</dbReference>
<dbReference type="PANTHER" id="PTHR22926:SF5">
    <property type="entry name" value="PHOSPHO-N-ACETYLMURAMOYL-PENTAPEPTIDE-TRANSFERASE HOMOLOG"/>
    <property type="match status" value="1"/>
</dbReference>
<dbReference type="Pfam" id="PF00953">
    <property type="entry name" value="Glycos_transf_4"/>
    <property type="match status" value="1"/>
</dbReference>
<dbReference type="PROSITE" id="PS01347">
    <property type="entry name" value="MRAY_1"/>
    <property type="match status" value="1"/>
</dbReference>
<dbReference type="PROSITE" id="PS01348">
    <property type="entry name" value="MRAY_2"/>
    <property type="match status" value="1"/>
</dbReference>
<organism>
    <name type="scientific">Neisseria meningitidis serogroup C / serotype 2a (strain ATCC 700532 / DSM 15464 / FAM18)</name>
    <dbReference type="NCBI Taxonomy" id="272831"/>
    <lineage>
        <taxon>Bacteria</taxon>
        <taxon>Pseudomonadati</taxon>
        <taxon>Pseudomonadota</taxon>
        <taxon>Betaproteobacteria</taxon>
        <taxon>Neisseriales</taxon>
        <taxon>Neisseriaceae</taxon>
        <taxon>Neisseria</taxon>
    </lineage>
</organism>
<evidence type="ECO:0000255" key="1">
    <source>
        <dbReference type="HAMAP-Rule" id="MF_00038"/>
    </source>
</evidence>
<name>MRAY_NEIMF</name>
<sequence length="360" mass="39328">MFLWLAHFSNWLTGLNIFQYTTFRAVMAALTALAFSLMFGPWTIRRLTALKCGQAVRTDGPQTHLVKNGTPTMGGSLILTAITVSTLLWGNWANPYIWILLGVLLATGALGFYDDWRKVVYKDPNGVSAKFKMVWQSSVAIIASLALFYLAANSANNILIVPFFKQIALPLGVVGFLVLSYLTIVGTSNAVNLTDGLDGLATFPVVLVAAGLAIFAYASGHSQFAQYLQLPYVAGANEVVIFCTAMCGACLGFLWFNAYPAQVFMGDVGALALGAALGTVAVIVRQEFVLVIMGGLFVVEAVSVMLQVGWYKKTKKRIFLMAPIHHHYEQKGWKETQVVVRFWIITIVLVLIGLSTLKIR</sequence>
<proteinExistence type="inferred from homology"/>
<comment type="function">
    <text evidence="1">Catalyzes the initial step of the lipid cycle reactions in the biosynthesis of the cell wall peptidoglycan: transfers peptidoglycan precursor phospho-MurNAc-pentapeptide from UDP-MurNAc-pentapeptide onto the lipid carrier undecaprenyl phosphate, yielding undecaprenyl-pyrophosphoryl-MurNAc-pentapeptide, known as lipid I.</text>
</comment>
<comment type="catalytic activity">
    <reaction evidence="1">
        <text>UDP-N-acetyl-alpha-D-muramoyl-L-alanyl-gamma-D-glutamyl-meso-2,6-diaminopimeloyl-D-alanyl-D-alanine + di-trans,octa-cis-undecaprenyl phosphate = di-trans,octa-cis-undecaprenyl diphospho-N-acetyl-alpha-D-muramoyl-L-alanyl-D-glutamyl-meso-2,6-diaminopimeloyl-D-alanyl-D-alanine + UMP</text>
        <dbReference type="Rhea" id="RHEA:28386"/>
        <dbReference type="ChEBI" id="CHEBI:57865"/>
        <dbReference type="ChEBI" id="CHEBI:60392"/>
        <dbReference type="ChEBI" id="CHEBI:61386"/>
        <dbReference type="ChEBI" id="CHEBI:61387"/>
        <dbReference type="EC" id="2.7.8.13"/>
    </reaction>
</comment>
<comment type="cofactor">
    <cofactor evidence="1">
        <name>Mg(2+)</name>
        <dbReference type="ChEBI" id="CHEBI:18420"/>
    </cofactor>
</comment>
<comment type="pathway">
    <text evidence="1">Cell wall biogenesis; peptidoglycan biosynthesis.</text>
</comment>
<comment type="subcellular location">
    <subcellularLocation>
        <location evidence="1">Cell inner membrane</location>
        <topology evidence="1">Multi-pass membrane protein</topology>
    </subcellularLocation>
</comment>
<comment type="similarity">
    <text evidence="1">Belongs to the glycosyltransferase 4 family. MraY subfamily.</text>
</comment>
<protein>
    <recommendedName>
        <fullName evidence="1">Phospho-N-acetylmuramoyl-pentapeptide-transferase</fullName>
        <ecNumber evidence="1">2.7.8.13</ecNumber>
    </recommendedName>
    <alternativeName>
        <fullName evidence="1">UDP-MurNAc-pentapeptide phosphotransferase</fullName>
    </alternativeName>
</protein>
<feature type="chain" id="PRO_1000003019" description="Phospho-N-acetylmuramoyl-pentapeptide-transferase">
    <location>
        <begin position="1"/>
        <end position="360"/>
    </location>
</feature>
<feature type="transmembrane region" description="Helical" evidence="1">
    <location>
        <begin position="24"/>
        <end position="44"/>
    </location>
</feature>
<feature type="transmembrane region" description="Helical" evidence="1">
    <location>
        <begin position="69"/>
        <end position="89"/>
    </location>
</feature>
<feature type="transmembrane region" description="Helical" evidence="1">
    <location>
        <begin position="92"/>
        <end position="112"/>
    </location>
</feature>
<feature type="transmembrane region" description="Helical" evidence="1">
    <location>
        <begin position="133"/>
        <end position="153"/>
    </location>
</feature>
<feature type="transmembrane region" description="Helical" evidence="1">
    <location>
        <begin position="158"/>
        <end position="178"/>
    </location>
</feature>
<feature type="transmembrane region" description="Helical" evidence="1">
    <location>
        <begin position="199"/>
        <end position="219"/>
    </location>
</feature>
<feature type="transmembrane region" description="Helical" evidence="1">
    <location>
        <begin position="239"/>
        <end position="259"/>
    </location>
</feature>
<feature type="transmembrane region" description="Helical" evidence="1">
    <location>
        <begin position="263"/>
        <end position="283"/>
    </location>
</feature>
<feature type="transmembrane region" description="Helical" evidence="1">
    <location>
        <begin position="288"/>
        <end position="308"/>
    </location>
</feature>
<feature type="transmembrane region" description="Helical" evidence="1">
    <location>
        <begin position="337"/>
        <end position="357"/>
    </location>
</feature>
<accession>A1KVL7</accession>
<keyword id="KW-0131">Cell cycle</keyword>
<keyword id="KW-0132">Cell division</keyword>
<keyword id="KW-0997">Cell inner membrane</keyword>
<keyword id="KW-1003">Cell membrane</keyword>
<keyword id="KW-0133">Cell shape</keyword>
<keyword id="KW-0961">Cell wall biogenesis/degradation</keyword>
<keyword id="KW-0460">Magnesium</keyword>
<keyword id="KW-0472">Membrane</keyword>
<keyword id="KW-0479">Metal-binding</keyword>
<keyword id="KW-0573">Peptidoglycan synthesis</keyword>
<keyword id="KW-0808">Transferase</keyword>
<keyword id="KW-0812">Transmembrane</keyword>
<keyword id="KW-1133">Transmembrane helix</keyword>